<reference key="1">
    <citation type="submission" date="2008-08" db="EMBL/GenBank/DDBJ databases">
        <title>Complete sequence of Vibrio fischeri strain MJ11.</title>
        <authorList>
            <person name="Mandel M.J."/>
            <person name="Stabb E.V."/>
            <person name="Ruby E.G."/>
            <person name="Ferriera S."/>
            <person name="Johnson J."/>
            <person name="Kravitz S."/>
            <person name="Beeson K."/>
            <person name="Sutton G."/>
            <person name="Rogers Y.-H."/>
            <person name="Friedman R."/>
            <person name="Frazier M."/>
            <person name="Venter J.C."/>
        </authorList>
    </citation>
    <scope>NUCLEOTIDE SEQUENCE [LARGE SCALE GENOMIC DNA]</scope>
    <source>
        <strain>MJ11</strain>
    </source>
</reference>
<keyword id="KW-0963">Cytoplasm</keyword>
<keyword id="KW-0690">Ribosome biogenesis</keyword>
<feature type="chain" id="PRO_1000136804" description="Ribosome maturation factor RimP">
    <location>
        <begin position="1"/>
        <end position="151"/>
    </location>
</feature>
<gene>
    <name evidence="1" type="primary">rimP</name>
    <name type="ordered locus">VFMJ11_0485</name>
</gene>
<comment type="function">
    <text evidence="1">Required for maturation of 30S ribosomal subunits.</text>
</comment>
<comment type="subcellular location">
    <subcellularLocation>
        <location evidence="1">Cytoplasm</location>
    </subcellularLocation>
</comment>
<comment type="similarity">
    <text evidence="1">Belongs to the RimP family.</text>
</comment>
<name>RIMP_ALIFM</name>
<sequence length="151" mass="16789">MTGLERQLTEMLEAPVGALGYELVGLEFVRAGEHSTLRVFIDHENGIFVEDCAEASRQISAVMDVEDPITVAYNLEVSSPGLERPLFKAAHYQQFVGHEVSLVLKMPMNNRRKWKGDILEVNGEIVTVTVDGNNEEFALSNISKANLVPKF</sequence>
<dbReference type="EMBL" id="CP001139">
    <property type="protein sequence ID" value="ACH66095.1"/>
    <property type="molecule type" value="Genomic_DNA"/>
</dbReference>
<dbReference type="RefSeq" id="WP_005417676.1">
    <property type="nucleotide sequence ID" value="NC_011184.1"/>
</dbReference>
<dbReference type="SMR" id="B5FA77"/>
<dbReference type="KEGG" id="vfm:VFMJ11_0485"/>
<dbReference type="HOGENOM" id="CLU_070525_1_1_6"/>
<dbReference type="Proteomes" id="UP000001857">
    <property type="component" value="Chromosome I"/>
</dbReference>
<dbReference type="GO" id="GO:0005829">
    <property type="term" value="C:cytosol"/>
    <property type="evidence" value="ECO:0007669"/>
    <property type="project" value="TreeGrafter"/>
</dbReference>
<dbReference type="GO" id="GO:0000028">
    <property type="term" value="P:ribosomal small subunit assembly"/>
    <property type="evidence" value="ECO:0007669"/>
    <property type="project" value="TreeGrafter"/>
</dbReference>
<dbReference type="GO" id="GO:0006412">
    <property type="term" value="P:translation"/>
    <property type="evidence" value="ECO:0007669"/>
    <property type="project" value="TreeGrafter"/>
</dbReference>
<dbReference type="CDD" id="cd01734">
    <property type="entry name" value="YlxS_C"/>
    <property type="match status" value="1"/>
</dbReference>
<dbReference type="FunFam" id="2.30.30.180:FF:000001">
    <property type="entry name" value="Ribosome maturation factor RimP"/>
    <property type="match status" value="1"/>
</dbReference>
<dbReference type="FunFam" id="3.30.300.70:FF:000001">
    <property type="entry name" value="Ribosome maturation factor RimP"/>
    <property type="match status" value="1"/>
</dbReference>
<dbReference type="Gene3D" id="2.30.30.180">
    <property type="entry name" value="Ribosome maturation factor RimP, C-terminal domain"/>
    <property type="match status" value="1"/>
</dbReference>
<dbReference type="Gene3D" id="3.30.300.70">
    <property type="entry name" value="RimP-like superfamily, N-terminal"/>
    <property type="match status" value="1"/>
</dbReference>
<dbReference type="HAMAP" id="MF_01077">
    <property type="entry name" value="RimP"/>
    <property type="match status" value="1"/>
</dbReference>
<dbReference type="InterPro" id="IPR003728">
    <property type="entry name" value="Ribosome_maturation_RimP"/>
</dbReference>
<dbReference type="InterPro" id="IPR028998">
    <property type="entry name" value="RimP_C"/>
</dbReference>
<dbReference type="InterPro" id="IPR036847">
    <property type="entry name" value="RimP_C_sf"/>
</dbReference>
<dbReference type="InterPro" id="IPR028989">
    <property type="entry name" value="RimP_N"/>
</dbReference>
<dbReference type="InterPro" id="IPR035956">
    <property type="entry name" value="RimP_N_sf"/>
</dbReference>
<dbReference type="NCBIfam" id="NF000927">
    <property type="entry name" value="PRK00092.1-1"/>
    <property type="match status" value="1"/>
</dbReference>
<dbReference type="PANTHER" id="PTHR33867">
    <property type="entry name" value="RIBOSOME MATURATION FACTOR RIMP"/>
    <property type="match status" value="1"/>
</dbReference>
<dbReference type="PANTHER" id="PTHR33867:SF1">
    <property type="entry name" value="RIBOSOME MATURATION FACTOR RIMP"/>
    <property type="match status" value="1"/>
</dbReference>
<dbReference type="Pfam" id="PF17384">
    <property type="entry name" value="DUF150_C"/>
    <property type="match status" value="1"/>
</dbReference>
<dbReference type="Pfam" id="PF02576">
    <property type="entry name" value="RimP_N"/>
    <property type="match status" value="1"/>
</dbReference>
<dbReference type="SUPFAM" id="SSF74942">
    <property type="entry name" value="YhbC-like, C-terminal domain"/>
    <property type="match status" value="1"/>
</dbReference>
<dbReference type="SUPFAM" id="SSF75420">
    <property type="entry name" value="YhbC-like, N-terminal domain"/>
    <property type="match status" value="1"/>
</dbReference>
<proteinExistence type="inferred from homology"/>
<organism>
    <name type="scientific">Aliivibrio fischeri (strain MJ11)</name>
    <name type="common">Vibrio fischeri</name>
    <dbReference type="NCBI Taxonomy" id="388396"/>
    <lineage>
        <taxon>Bacteria</taxon>
        <taxon>Pseudomonadati</taxon>
        <taxon>Pseudomonadota</taxon>
        <taxon>Gammaproteobacteria</taxon>
        <taxon>Vibrionales</taxon>
        <taxon>Vibrionaceae</taxon>
        <taxon>Aliivibrio</taxon>
    </lineage>
</organism>
<accession>B5FA77</accession>
<evidence type="ECO:0000255" key="1">
    <source>
        <dbReference type="HAMAP-Rule" id="MF_01077"/>
    </source>
</evidence>
<protein>
    <recommendedName>
        <fullName evidence="1">Ribosome maturation factor RimP</fullName>
    </recommendedName>
</protein>